<sequence length="165" mass="18060">MATLLFDDGREATAAEIEAIARAHRIVVEHRPVPAALAETLARPLLDDTSAATVLDALPPRPEFPSRDLIVLHPDRPDNEQLATKFENWHRHAGDEIRHILDGAGIFGVIVDGQRADLHVGPGDFIVVPAGLEHNFRLTAARRIKAVRYLSDAEGWSAEFTGRAA</sequence>
<evidence type="ECO:0000255" key="1">
    <source>
        <dbReference type="HAMAP-Rule" id="MF_01682"/>
    </source>
</evidence>
<organism>
    <name type="scientific">Rhodopseudomonas palustris (strain ATCC BAA-98 / CGA009)</name>
    <dbReference type="NCBI Taxonomy" id="258594"/>
    <lineage>
        <taxon>Bacteria</taxon>
        <taxon>Pseudomonadati</taxon>
        <taxon>Pseudomonadota</taxon>
        <taxon>Alphaproteobacteria</taxon>
        <taxon>Hyphomicrobiales</taxon>
        <taxon>Nitrobacteraceae</taxon>
        <taxon>Rhodopseudomonas</taxon>
    </lineage>
</organism>
<keyword id="KW-0028">Amino-acid biosynthesis</keyword>
<keyword id="KW-0223">Dioxygenase</keyword>
<keyword id="KW-0408">Iron</keyword>
<keyword id="KW-0479">Metal-binding</keyword>
<keyword id="KW-0486">Methionine biosynthesis</keyword>
<keyword id="KW-0533">Nickel</keyword>
<keyword id="KW-0560">Oxidoreductase</keyword>
<gene>
    <name evidence="1" type="primary">mtnD</name>
    <name type="ordered locus">RPA2352</name>
</gene>
<reference key="1">
    <citation type="journal article" date="2004" name="Nat. Biotechnol.">
        <title>Complete genome sequence of the metabolically versatile photosynthetic bacterium Rhodopseudomonas palustris.</title>
        <authorList>
            <person name="Larimer F.W."/>
            <person name="Chain P."/>
            <person name="Hauser L."/>
            <person name="Lamerdin J.E."/>
            <person name="Malfatti S."/>
            <person name="Do L."/>
            <person name="Land M.L."/>
            <person name="Pelletier D.A."/>
            <person name="Beatty J.T."/>
            <person name="Lang A.S."/>
            <person name="Tabita F.R."/>
            <person name="Gibson J.L."/>
            <person name="Hanson T.E."/>
            <person name="Bobst C."/>
            <person name="Torres y Torres J.L."/>
            <person name="Peres C."/>
            <person name="Harrison F.H."/>
            <person name="Gibson J."/>
            <person name="Harwood C.S."/>
        </authorList>
    </citation>
    <scope>NUCLEOTIDE SEQUENCE [LARGE SCALE GENOMIC DNA]</scope>
    <source>
        <strain>ATCC BAA-98 / CGA009</strain>
    </source>
</reference>
<dbReference type="EC" id="1.13.11.54" evidence="1"/>
<dbReference type="EC" id="1.13.11.53" evidence="1"/>
<dbReference type="EMBL" id="BX572600">
    <property type="protein sequence ID" value="CAE27793.1"/>
    <property type="molecule type" value="Genomic_DNA"/>
</dbReference>
<dbReference type="RefSeq" id="WP_011157905.1">
    <property type="nucleotide sequence ID" value="NZ_CP116810.1"/>
</dbReference>
<dbReference type="SMR" id="Q6N7A6"/>
<dbReference type="STRING" id="258594.RPA2352"/>
<dbReference type="GeneID" id="66893411"/>
<dbReference type="eggNOG" id="COG1791">
    <property type="taxonomic scope" value="Bacteria"/>
</dbReference>
<dbReference type="HOGENOM" id="CLU_125400_0_0_5"/>
<dbReference type="PhylomeDB" id="Q6N7A6"/>
<dbReference type="UniPathway" id="UPA00904">
    <property type="reaction ID" value="UER00878"/>
</dbReference>
<dbReference type="GO" id="GO:0010308">
    <property type="term" value="F:acireductone dioxygenase (Ni2+-requiring) activity"/>
    <property type="evidence" value="ECO:0007669"/>
    <property type="project" value="UniProtKB-UniRule"/>
</dbReference>
<dbReference type="GO" id="GO:0010309">
    <property type="term" value="F:acireductone dioxygenase [iron(II)-requiring] activity"/>
    <property type="evidence" value="ECO:0007669"/>
    <property type="project" value="UniProtKB-UniRule"/>
</dbReference>
<dbReference type="GO" id="GO:0005506">
    <property type="term" value="F:iron ion binding"/>
    <property type="evidence" value="ECO:0007669"/>
    <property type="project" value="UniProtKB-UniRule"/>
</dbReference>
<dbReference type="GO" id="GO:0016151">
    <property type="term" value="F:nickel cation binding"/>
    <property type="evidence" value="ECO:0007669"/>
    <property type="project" value="UniProtKB-UniRule"/>
</dbReference>
<dbReference type="GO" id="GO:0019509">
    <property type="term" value="P:L-methionine salvage from methylthioadenosine"/>
    <property type="evidence" value="ECO:0007669"/>
    <property type="project" value="UniProtKB-UniRule"/>
</dbReference>
<dbReference type="GO" id="GO:0019284">
    <property type="term" value="P:L-methionine salvage from S-adenosylmethionine"/>
    <property type="evidence" value="ECO:0007669"/>
    <property type="project" value="InterPro"/>
</dbReference>
<dbReference type="CDD" id="cd02232">
    <property type="entry name" value="cupin_ARD"/>
    <property type="match status" value="1"/>
</dbReference>
<dbReference type="Gene3D" id="2.60.120.10">
    <property type="entry name" value="Jelly Rolls"/>
    <property type="match status" value="1"/>
</dbReference>
<dbReference type="HAMAP" id="MF_01682">
    <property type="entry name" value="Salvage_MtnD"/>
    <property type="match status" value="1"/>
</dbReference>
<dbReference type="InterPro" id="IPR004313">
    <property type="entry name" value="ARD"/>
</dbReference>
<dbReference type="InterPro" id="IPR023956">
    <property type="entry name" value="ARD_bac"/>
</dbReference>
<dbReference type="InterPro" id="IPR014710">
    <property type="entry name" value="RmlC-like_jellyroll"/>
</dbReference>
<dbReference type="InterPro" id="IPR011051">
    <property type="entry name" value="RmlC_Cupin_sf"/>
</dbReference>
<dbReference type="PANTHER" id="PTHR23418">
    <property type="entry name" value="ACIREDUCTONE DIOXYGENASE"/>
    <property type="match status" value="1"/>
</dbReference>
<dbReference type="PANTHER" id="PTHR23418:SF0">
    <property type="entry name" value="ACIREDUCTONE DIOXYGENASE"/>
    <property type="match status" value="1"/>
</dbReference>
<dbReference type="Pfam" id="PF03079">
    <property type="entry name" value="ARD"/>
    <property type="match status" value="1"/>
</dbReference>
<dbReference type="SUPFAM" id="SSF51182">
    <property type="entry name" value="RmlC-like cupins"/>
    <property type="match status" value="1"/>
</dbReference>
<feature type="chain" id="PRO_0000359226" description="Acireductone dioxygenase">
    <location>
        <begin position="1"/>
        <end position="165"/>
    </location>
</feature>
<feature type="binding site" evidence="1">
    <location>
        <position position="90"/>
    </location>
    <ligand>
        <name>Fe(2+)</name>
        <dbReference type="ChEBI" id="CHEBI:29033"/>
    </ligand>
</feature>
<feature type="binding site" evidence="1">
    <location>
        <position position="90"/>
    </location>
    <ligand>
        <name>Ni(2+)</name>
        <dbReference type="ChEBI" id="CHEBI:49786"/>
    </ligand>
</feature>
<feature type="binding site" evidence="1">
    <location>
        <position position="92"/>
    </location>
    <ligand>
        <name>Fe(2+)</name>
        <dbReference type="ChEBI" id="CHEBI:29033"/>
    </ligand>
</feature>
<feature type="binding site" evidence="1">
    <location>
        <position position="92"/>
    </location>
    <ligand>
        <name>Ni(2+)</name>
        <dbReference type="ChEBI" id="CHEBI:49786"/>
    </ligand>
</feature>
<feature type="binding site" evidence="1">
    <location>
        <position position="96"/>
    </location>
    <ligand>
        <name>Fe(2+)</name>
        <dbReference type="ChEBI" id="CHEBI:29033"/>
    </ligand>
</feature>
<feature type="binding site" evidence="1">
    <location>
        <position position="96"/>
    </location>
    <ligand>
        <name>Ni(2+)</name>
        <dbReference type="ChEBI" id="CHEBI:49786"/>
    </ligand>
</feature>
<feature type="binding site" evidence="1">
    <location>
        <position position="134"/>
    </location>
    <ligand>
        <name>Fe(2+)</name>
        <dbReference type="ChEBI" id="CHEBI:29033"/>
    </ligand>
</feature>
<feature type="binding site" evidence="1">
    <location>
        <position position="134"/>
    </location>
    <ligand>
        <name>Ni(2+)</name>
        <dbReference type="ChEBI" id="CHEBI:49786"/>
    </ligand>
</feature>
<feature type="site" description="May play a role in transmitting local conformational changes" evidence="1">
    <location>
        <position position="95"/>
    </location>
</feature>
<feature type="site" description="Important to generate the dianion" evidence="1">
    <location>
        <position position="98"/>
    </location>
</feature>
<proteinExistence type="inferred from homology"/>
<protein>
    <recommendedName>
        <fullName evidence="1">Acireductone dioxygenase</fullName>
    </recommendedName>
    <alternativeName>
        <fullName evidence="1">1,2-dihydroxy-3-keto-5-methylthiopentene dioxygenase</fullName>
        <shortName evidence="1">DHK-MTPene dioxygenase</shortName>
    </alternativeName>
    <alternativeName>
        <fullName evidence="1">Acireductone dioxygenase (Fe(2+)-requiring)</fullName>
        <shortName evidence="1">ARD'</shortName>
        <shortName evidence="1">Fe-ARD</shortName>
        <ecNumber evidence="1">1.13.11.54</ecNumber>
    </alternativeName>
    <alternativeName>
        <fullName evidence="1">Acireductone dioxygenase (Ni(2+)-requiring)</fullName>
        <shortName evidence="1">ARD</shortName>
        <shortName evidence="1">Ni-ARD</shortName>
        <ecNumber evidence="1">1.13.11.53</ecNumber>
    </alternativeName>
</protein>
<comment type="function">
    <text evidence="1">Catalyzes 2 different reactions between oxygen and the acireductone 1,2-dihydroxy-3-keto-5-methylthiopentene (DHK-MTPene) depending upon the metal bound in the active site. Fe-containing acireductone dioxygenase (Fe-ARD) produces formate and 2-keto-4-methylthiobutyrate (KMTB), the alpha-ketoacid precursor of methionine in the methionine recycle pathway. Ni-containing acireductone dioxygenase (Ni-ARD) produces methylthiopropionate, carbon monoxide and formate, and does not lie on the methionine recycle pathway.</text>
</comment>
<comment type="catalytic activity">
    <reaction evidence="1">
        <text>1,2-dihydroxy-5-(methylsulfanyl)pent-1-en-3-one + O2 = 3-(methylsulfanyl)propanoate + CO + formate + 2 H(+)</text>
        <dbReference type="Rhea" id="RHEA:14161"/>
        <dbReference type="ChEBI" id="CHEBI:15378"/>
        <dbReference type="ChEBI" id="CHEBI:15379"/>
        <dbReference type="ChEBI" id="CHEBI:15740"/>
        <dbReference type="ChEBI" id="CHEBI:17245"/>
        <dbReference type="ChEBI" id="CHEBI:49016"/>
        <dbReference type="ChEBI" id="CHEBI:49252"/>
        <dbReference type="EC" id="1.13.11.53"/>
    </reaction>
</comment>
<comment type="catalytic activity">
    <reaction evidence="1">
        <text>1,2-dihydroxy-5-(methylsulfanyl)pent-1-en-3-one + O2 = 4-methylsulfanyl-2-oxobutanoate + formate + 2 H(+)</text>
        <dbReference type="Rhea" id="RHEA:24504"/>
        <dbReference type="ChEBI" id="CHEBI:15378"/>
        <dbReference type="ChEBI" id="CHEBI:15379"/>
        <dbReference type="ChEBI" id="CHEBI:15740"/>
        <dbReference type="ChEBI" id="CHEBI:16723"/>
        <dbReference type="ChEBI" id="CHEBI:49252"/>
        <dbReference type="EC" id="1.13.11.54"/>
    </reaction>
</comment>
<comment type="cofactor">
    <cofactor evidence="1">
        <name>Fe(2+)</name>
        <dbReference type="ChEBI" id="CHEBI:29033"/>
    </cofactor>
    <text evidence="1">Binds 1 Fe(2+) cation per monomer.</text>
</comment>
<comment type="cofactor">
    <cofactor evidence="1">
        <name>Ni(2+)</name>
        <dbReference type="ChEBI" id="CHEBI:49786"/>
    </cofactor>
    <text evidence="1">Binds 1 nickel ion per monomer.</text>
</comment>
<comment type="pathway">
    <text evidence="1">Amino-acid biosynthesis; L-methionine biosynthesis via salvage pathway; L-methionine from S-methyl-5-thio-alpha-D-ribose 1-phosphate: step 5/6.</text>
</comment>
<comment type="subunit">
    <text evidence="1">Monomer.</text>
</comment>
<comment type="similarity">
    <text evidence="1">Belongs to the acireductone dioxygenase (ARD) family.</text>
</comment>
<name>MTND_RHOPA</name>
<accession>Q6N7A6</accession>